<proteinExistence type="evidence at protein level"/>
<gene>
    <name evidence="3" type="primary">Cabcoco1</name>
</gene>
<reference key="1">
    <citation type="journal article" date="2005" name="Science">
        <title>The transcriptional landscape of the mammalian genome.</title>
        <authorList>
            <person name="Carninci P."/>
            <person name="Kasukawa T."/>
            <person name="Katayama S."/>
            <person name="Gough J."/>
            <person name="Frith M.C."/>
            <person name="Maeda N."/>
            <person name="Oyama R."/>
            <person name="Ravasi T."/>
            <person name="Lenhard B."/>
            <person name="Wells C."/>
            <person name="Kodzius R."/>
            <person name="Shimokawa K."/>
            <person name="Bajic V.B."/>
            <person name="Brenner S.E."/>
            <person name="Batalov S."/>
            <person name="Forrest A.R."/>
            <person name="Zavolan M."/>
            <person name="Davis M.J."/>
            <person name="Wilming L.G."/>
            <person name="Aidinis V."/>
            <person name="Allen J.E."/>
            <person name="Ambesi-Impiombato A."/>
            <person name="Apweiler R."/>
            <person name="Aturaliya R.N."/>
            <person name="Bailey T.L."/>
            <person name="Bansal M."/>
            <person name="Baxter L."/>
            <person name="Beisel K.W."/>
            <person name="Bersano T."/>
            <person name="Bono H."/>
            <person name="Chalk A.M."/>
            <person name="Chiu K.P."/>
            <person name="Choudhary V."/>
            <person name="Christoffels A."/>
            <person name="Clutterbuck D.R."/>
            <person name="Crowe M.L."/>
            <person name="Dalla E."/>
            <person name="Dalrymple B.P."/>
            <person name="de Bono B."/>
            <person name="Della Gatta G."/>
            <person name="di Bernardo D."/>
            <person name="Down T."/>
            <person name="Engstrom P."/>
            <person name="Fagiolini M."/>
            <person name="Faulkner G."/>
            <person name="Fletcher C.F."/>
            <person name="Fukushima T."/>
            <person name="Furuno M."/>
            <person name="Futaki S."/>
            <person name="Gariboldi M."/>
            <person name="Georgii-Hemming P."/>
            <person name="Gingeras T.R."/>
            <person name="Gojobori T."/>
            <person name="Green R.E."/>
            <person name="Gustincich S."/>
            <person name="Harbers M."/>
            <person name="Hayashi Y."/>
            <person name="Hensch T.K."/>
            <person name="Hirokawa N."/>
            <person name="Hill D."/>
            <person name="Huminiecki L."/>
            <person name="Iacono M."/>
            <person name="Ikeo K."/>
            <person name="Iwama A."/>
            <person name="Ishikawa T."/>
            <person name="Jakt M."/>
            <person name="Kanapin A."/>
            <person name="Katoh M."/>
            <person name="Kawasawa Y."/>
            <person name="Kelso J."/>
            <person name="Kitamura H."/>
            <person name="Kitano H."/>
            <person name="Kollias G."/>
            <person name="Krishnan S.P."/>
            <person name="Kruger A."/>
            <person name="Kummerfeld S.K."/>
            <person name="Kurochkin I.V."/>
            <person name="Lareau L.F."/>
            <person name="Lazarevic D."/>
            <person name="Lipovich L."/>
            <person name="Liu J."/>
            <person name="Liuni S."/>
            <person name="McWilliam S."/>
            <person name="Madan Babu M."/>
            <person name="Madera M."/>
            <person name="Marchionni L."/>
            <person name="Matsuda H."/>
            <person name="Matsuzawa S."/>
            <person name="Miki H."/>
            <person name="Mignone F."/>
            <person name="Miyake S."/>
            <person name="Morris K."/>
            <person name="Mottagui-Tabar S."/>
            <person name="Mulder N."/>
            <person name="Nakano N."/>
            <person name="Nakauchi H."/>
            <person name="Ng P."/>
            <person name="Nilsson R."/>
            <person name="Nishiguchi S."/>
            <person name="Nishikawa S."/>
            <person name="Nori F."/>
            <person name="Ohara O."/>
            <person name="Okazaki Y."/>
            <person name="Orlando V."/>
            <person name="Pang K.C."/>
            <person name="Pavan W.J."/>
            <person name="Pavesi G."/>
            <person name="Pesole G."/>
            <person name="Petrovsky N."/>
            <person name="Piazza S."/>
            <person name="Reed J."/>
            <person name="Reid J.F."/>
            <person name="Ring B.Z."/>
            <person name="Ringwald M."/>
            <person name="Rost B."/>
            <person name="Ruan Y."/>
            <person name="Salzberg S.L."/>
            <person name="Sandelin A."/>
            <person name="Schneider C."/>
            <person name="Schoenbach C."/>
            <person name="Sekiguchi K."/>
            <person name="Semple C.A."/>
            <person name="Seno S."/>
            <person name="Sessa L."/>
            <person name="Sheng Y."/>
            <person name="Shibata Y."/>
            <person name="Shimada H."/>
            <person name="Shimada K."/>
            <person name="Silva D."/>
            <person name="Sinclair B."/>
            <person name="Sperling S."/>
            <person name="Stupka E."/>
            <person name="Sugiura K."/>
            <person name="Sultana R."/>
            <person name="Takenaka Y."/>
            <person name="Taki K."/>
            <person name="Tammoja K."/>
            <person name="Tan S.L."/>
            <person name="Tang S."/>
            <person name="Taylor M.S."/>
            <person name="Tegner J."/>
            <person name="Teichmann S.A."/>
            <person name="Ueda H.R."/>
            <person name="van Nimwegen E."/>
            <person name="Verardo R."/>
            <person name="Wei C.L."/>
            <person name="Yagi K."/>
            <person name="Yamanishi H."/>
            <person name="Zabarovsky E."/>
            <person name="Zhu S."/>
            <person name="Zimmer A."/>
            <person name="Hide W."/>
            <person name="Bult C."/>
            <person name="Grimmond S.M."/>
            <person name="Teasdale R.D."/>
            <person name="Liu E.T."/>
            <person name="Brusic V."/>
            <person name="Quackenbush J."/>
            <person name="Wahlestedt C."/>
            <person name="Mattick J.S."/>
            <person name="Hume D.A."/>
            <person name="Kai C."/>
            <person name="Sasaki D."/>
            <person name="Tomaru Y."/>
            <person name="Fukuda S."/>
            <person name="Kanamori-Katayama M."/>
            <person name="Suzuki M."/>
            <person name="Aoki J."/>
            <person name="Arakawa T."/>
            <person name="Iida J."/>
            <person name="Imamura K."/>
            <person name="Itoh M."/>
            <person name="Kato T."/>
            <person name="Kawaji H."/>
            <person name="Kawagashira N."/>
            <person name="Kawashima T."/>
            <person name="Kojima M."/>
            <person name="Kondo S."/>
            <person name="Konno H."/>
            <person name="Nakano K."/>
            <person name="Ninomiya N."/>
            <person name="Nishio T."/>
            <person name="Okada M."/>
            <person name="Plessy C."/>
            <person name="Shibata K."/>
            <person name="Shiraki T."/>
            <person name="Suzuki S."/>
            <person name="Tagami M."/>
            <person name="Waki K."/>
            <person name="Watahiki A."/>
            <person name="Okamura-Oho Y."/>
            <person name="Suzuki H."/>
            <person name="Kawai J."/>
            <person name="Hayashizaki Y."/>
        </authorList>
    </citation>
    <scope>NUCLEOTIDE SEQUENCE [LARGE SCALE MRNA]</scope>
    <source>
        <strain>C57BL/6J</strain>
        <tissue>Testis</tissue>
    </source>
</reference>
<reference key="2">
    <citation type="journal article" date="2004" name="Genome Res.">
        <title>The status, quality, and expansion of the NIH full-length cDNA project: the Mammalian Gene Collection (MGC).</title>
        <authorList>
            <consortium name="The MGC Project Team"/>
        </authorList>
    </citation>
    <scope>NUCLEOTIDE SEQUENCE [LARGE SCALE MRNA]</scope>
    <source>
        <tissue>Testis</tissue>
    </source>
</reference>
<reference key="3">
    <citation type="journal article" date="2016" name="Mol. Reprod. Dev.">
        <title>CABCOCO1, a novel coiled-coil protein with calcium-binding activity, is localized in the sperm flagellum.</title>
        <authorList>
            <person name="Kawashima A."/>
            <person name="Kigoshi T."/>
            <person name="Katoh Y."/>
            <person name="Ishikawa Y."/>
            <person name="Shawki H.H."/>
            <person name="Inoue N."/>
            <person name="Tamba M."/>
            <person name="Matsuda M."/>
            <person name="Okamura N."/>
        </authorList>
    </citation>
    <scope>FUNCTION</scope>
    <scope>CALCIUM-BINDING</scope>
    <scope>SUBCELLULAR LOCATION</scope>
    <scope>TISSUE SPECIFICITY</scope>
    <scope>IDENTIFICATION BY MASS SPECTROMETRY</scope>
</reference>
<feature type="chain" id="PRO_0000089820" description="Ciliary-associated calcium-binding coiled-coil protein 1">
    <location>
        <begin position="1"/>
        <end position="208"/>
    </location>
</feature>
<accession>Q8CDT7</accession>
<name>CBCO1_MOUSE</name>
<comment type="function">
    <text evidence="1">Calcium-binding protein (PubMed:26990073). May be involved in the control of sperm flagellar movement (PubMed:26990073).</text>
</comment>
<comment type="subcellular location">
    <subcellularLocation>
        <location evidence="1">Cytoplasm</location>
    </subcellularLocation>
    <subcellularLocation>
        <location evidence="1">Cytoplasm</location>
        <location evidence="1">Cytoskeleton</location>
        <location evidence="1">Microtubule organizing center</location>
        <location evidence="1">Centrosome</location>
    </subcellularLocation>
    <subcellularLocation>
        <location evidence="1">Cell projection</location>
        <location evidence="1">Cilium</location>
        <location evidence="1">Flagellum</location>
    </subcellularLocation>
    <text evidence="1">Colocalized with pericentrin at centrosome of spermatocytes and round spermatids (PubMed:26990073).</text>
</comment>
<comment type="tissue specificity">
    <text evidence="1">Testis-specific (PubMed:26990073). Expressed in spermatocytes and round spermatids (at protein level) (PubMed:26990073).</text>
</comment>
<comment type="sequence caution" evidence="2">
    <conflict type="erroneous initiation">
        <sequence resource="EMBL-CDS" id="AAH87900"/>
    </conflict>
</comment>
<comment type="sequence caution" evidence="2">
    <conflict type="erroneous initiation">
        <sequence resource="EMBL-CDS" id="BAC26533"/>
    </conflict>
</comment>
<protein>
    <recommendedName>
        <fullName evidence="3">Ciliary-associated calcium-binding coiled-coil protein 1</fullName>
    </recommendedName>
</protein>
<keyword id="KW-0106">Calcium</keyword>
<keyword id="KW-0966">Cell projection</keyword>
<keyword id="KW-0969">Cilium</keyword>
<keyword id="KW-0963">Cytoplasm</keyword>
<keyword id="KW-0206">Cytoskeleton</keyword>
<keyword id="KW-0282">Flagellum</keyword>
<keyword id="KW-0479">Metal-binding</keyword>
<keyword id="KW-1185">Reference proteome</keyword>
<sequence length="208" mass="24087">MNFSIEQYSKFMTLLDMLLHNLQTLHMSLEDSIKWLGEVMAEIGPNHSQKSEDFHVFEVKEANAIIDYLKISLFQHYRLYEFLFYSTREEIVIGTEQTIEVVKPADYPFPAPLEEGISLDTYSTFIEPLPTPDMEQKVLDQEQGTQEALLESEMREEDPLGGFTIDDVKSALERVTDEVLISMQKEISEKLQVQEEAFNARIEKLKKA</sequence>
<evidence type="ECO:0000269" key="1">
    <source>
    </source>
</evidence>
<evidence type="ECO:0000305" key="2"/>
<evidence type="ECO:0000312" key="3">
    <source>
        <dbReference type="MGI" id="MGI:1920537"/>
    </source>
</evidence>
<organism>
    <name type="scientific">Mus musculus</name>
    <name type="common">Mouse</name>
    <dbReference type="NCBI Taxonomy" id="10090"/>
    <lineage>
        <taxon>Eukaryota</taxon>
        <taxon>Metazoa</taxon>
        <taxon>Chordata</taxon>
        <taxon>Craniata</taxon>
        <taxon>Vertebrata</taxon>
        <taxon>Euteleostomi</taxon>
        <taxon>Mammalia</taxon>
        <taxon>Eutheria</taxon>
        <taxon>Euarchontoglires</taxon>
        <taxon>Glires</taxon>
        <taxon>Rodentia</taxon>
        <taxon>Myomorpha</taxon>
        <taxon>Muroidea</taxon>
        <taxon>Muridae</taxon>
        <taxon>Murinae</taxon>
        <taxon>Mus</taxon>
        <taxon>Mus</taxon>
    </lineage>
</organism>
<dbReference type="EMBL" id="AK029622">
    <property type="protein sequence ID" value="BAC26533.1"/>
    <property type="status" value="ALT_INIT"/>
    <property type="molecule type" value="mRNA"/>
</dbReference>
<dbReference type="EMBL" id="BC087900">
    <property type="protein sequence ID" value="AAH87900.1"/>
    <property type="status" value="ALT_INIT"/>
    <property type="molecule type" value="mRNA"/>
</dbReference>
<dbReference type="RefSeq" id="NP_082767.1">
    <property type="nucleotide sequence ID" value="NM_028491.1"/>
</dbReference>
<dbReference type="SMR" id="Q8CDT7"/>
<dbReference type="FunCoup" id="Q8CDT7">
    <property type="interactions" value="82"/>
</dbReference>
<dbReference type="STRING" id="10090.ENSMUSP00000020103"/>
<dbReference type="GlyGen" id="Q8CDT7">
    <property type="glycosylation" value="1 site"/>
</dbReference>
<dbReference type="PhosphoSitePlus" id="Q8CDT7"/>
<dbReference type="PaxDb" id="10090-ENSMUSP00000020103"/>
<dbReference type="ProteomicsDB" id="265560"/>
<dbReference type="Antibodypedia" id="52377">
    <property type="antibodies" value="9 antibodies from 6 providers"/>
</dbReference>
<dbReference type="DNASU" id="73287"/>
<dbReference type="Ensembl" id="ENSMUST00000166919.4">
    <property type="protein sequence ID" value="ENSMUSP00000128895.3"/>
    <property type="gene ID" value="ENSMUSG00000019945.11"/>
</dbReference>
<dbReference type="GeneID" id="73287"/>
<dbReference type="KEGG" id="mmu:73287"/>
<dbReference type="UCSC" id="uc007fml.1">
    <property type="organism name" value="mouse"/>
</dbReference>
<dbReference type="AGR" id="MGI:1920537"/>
<dbReference type="CTD" id="219621"/>
<dbReference type="MGI" id="MGI:1920537">
    <property type="gene designation" value="Cabcoco1"/>
</dbReference>
<dbReference type="VEuPathDB" id="HostDB:ENSMUSG00000019945"/>
<dbReference type="eggNOG" id="ENOG502RTDR">
    <property type="taxonomic scope" value="Eukaryota"/>
</dbReference>
<dbReference type="GeneTree" id="ENSGT00390000004181"/>
<dbReference type="InParanoid" id="Q8CDT7"/>
<dbReference type="OrthoDB" id="2126027at2759"/>
<dbReference type="PhylomeDB" id="Q8CDT7"/>
<dbReference type="TreeFam" id="TF329043"/>
<dbReference type="BioGRID-ORCS" id="73287">
    <property type="hits" value="1 hit in 77 CRISPR screens"/>
</dbReference>
<dbReference type="ChiTaRS" id="Cabcoco1">
    <property type="organism name" value="mouse"/>
</dbReference>
<dbReference type="PRO" id="PR:Q8CDT7"/>
<dbReference type="Proteomes" id="UP000000589">
    <property type="component" value="Chromosome 10"/>
</dbReference>
<dbReference type="RNAct" id="Q8CDT7">
    <property type="molecule type" value="protein"/>
</dbReference>
<dbReference type="Bgee" id="ENSMUSG00000019945">
    <property type="expression patterns" value="Expressed in spermatocyte and 79 other cell types or tissues"/>
</dbReference>
<dbReference type="ExpressionAtlas" id="Q8CDT7">
    <property type="expression patterns" value="baseline and differential"/>
</dbReference>
<dbReference type="GO" id="GO:0005813">
    <property type="term" value="C:centrosome"/>
    <property type="evidence" value="ECO:0000314"/>
    <property type="project" value="UniProtKB"/>
</dbReference>
<dbReference type="GO" id="GO:0005737">
    <property type="term" value="C:cytoplasm"/>
    <property type="evidence" value="ECO:0000314"/>
    <property type="project" value="UniProtKB"/>
</dbReference>
<dbReference type="GO" id="GO:0036126">
    <property type="term" value="C:sperm flagellum"/>
    <property type="evidence" value="ECO:0000314"/>
    <property type="project" value="UniProtKB"/>
</dbReference>
<dbReference type="GO" id="GO:0005509">
    <property type="term" value="F:calcium ion binding"/>
    <property type="evidence" value="ECO:0000314"/>
    <property type="project" value="UniProtKB"/>
</dbReference>
<dbReference type="GO" id="GO:0120316">
    <property type="term" value="P:sperm flagellum assembly"/>
    <property type="evidence" value="ECO:0000315"/>
    <property type="project" value="MGI"/>
</dbReference>
<dbReference type="InterPro" id="IPR032727">
    <property type="entry name" value="CLAMP"/>
</dbReference>
<dbReference type="PANTHER" id="PTHR28457:SF3">
    <property type="entry name" value="CILIARY-ASSOCIATED CALCIUM-BINDING COILED-COIL PROTEIN 1"/>
    <property type="match status" value="1"/>
</dbReference>
<dbReference type="PANTHER" id="PTHR28457">
    <property type="entry name" value="COILED-COIL DOMAIN-CONTAINING PROTEIN 189"/>
    <property type="match status" value="1"/>
</dbReference>
<dbReference type="Pfam" id="PF14769">
    <property type="entry name" value="CLAMP"/>
    <property type="match status" value="1"/>
</dbReference>